<gene>
    <name type="primary">MT-CYB</name>
    <name type="synonym">COB</name>
    <name type="synonym">CYTB</name>
    <name type="synonym">MTCYB</name>
</gene>
<organism>
    <name type="scientific">Redunca redunca</name>
    <name type="common">Bohor reedbuck</name>
    <dbReference type="NCBI Taxonomy" id="59556"/>
    <lineage>
        <taxon>Eukaryota</taxon>
        <taxon>Metazoa</taxon>
        <taxon>Chordata</taxon>
        <taxon>Craniata</taxon>
        <taxon>Vertebrata</taxon>
        <taxon>Euteleostomi</taxon>
        <taxon>Mammalia</taxon>
        <taxon>Eutheria</taxon>
        <taxon>Laurasiatheria</taxon>
        <taxon>Artiodactyla</taxon>
        <taxon>Ruminantia</taxon>
        <taxon>Pecora</taxon>
        <taxon>Bovidae</taxon>
        <taxon>Reduncinae</taxon>
        <taxon>Redunca</taxon>
    </lineage>
</organism>
<comment type="function">
    <text evidence="2">Component of the ubiquinol-cytochrome c reductase complex (complex III or cytochrome b-c1 complex) that is part of the mitochondrial respiratory chain. The b-c1 complex mediates electron transfer from ubiquinol to cytochrome c. Contributes to the generation of a proton gradient across the mitochondrial membrane that is then used for ATP synthesis.</text>
</comment>
<comment type="cofactor">
    <cofactor evidence="2">
        <name>heme b</name>
        <dbReference type="ChEBI" id="CHEBI:60344"/>
    </cofactor>
    <text evidence="2">Binds 2 heme b groups non-covalently.</text>
</comment>
<comment type="subunit">
    <text evidence="2">The cytochrome bc1 complex contains 11 subunits: 3 respiratory subunits (MT-CYB, CYC1 and UQCRFS1), 2 core proteins (UQCRC1 and UQCRC2) and 6 low-molecular weight proteins (UQCRH/QCR6, UQCRB/QCR7, UQCRQ/QCR8, UQCR10/QCR9, UQCR11/QCR10 and a cleavage product of UQCRFS1). This cytochrome bc1 complex then forms a dimer.</text>
</comment>
<comment type="subcellular location">
    <subcellularLocation>
        <location evidence="2">Mitochondrion inner membrane</location>
        <topology evidence="2">Multi-pass membrane protein</topology>
    </subcellularLocation>
</comment>
<comment type="miscellaneous">
    <text evidence="1">Heme 1 (or BL or b562) is low-potential and absorbs at about 562 nm, and heme 2 (or BH or b566) is high-potential and absorbs at about 566 nm.</text>
</comment>
<comment type="similarity">
    <text evidence="3 4">Belongs to the cytochrome b family.</text>
</comment>
<comment type="caution">
    <text evidence="2">The full-length protein contains only eight transmembrane helices, not nine as predicted by bioinformatics tools.</text>
</comment>
<reference key="1">
    <citation type="journal article" date="2001" name="J. Mammal. Evol.">
        <title>Molecular systematics and phylogenetics of the reduncini (Artiodactyla: Bovidae) inferred from the analysis of mitochondrial cytochrome b gene sequences.</title>
        <authorList>
            <person name="Birungi J."/>
            <person name="Arctander P."/>
        </authorList>
    </citation>
    <scope>NUCLEOTIDE SEQUENCE [GENOMIC DNA]</scope>
</reference>
<protein>
    <recommendedName>
        <fullName>Cytochrome b</fullName>
    </recommendedName>
    <alternativeName>
        <fullName>Complex III subunit 3</fullName>
    </alternativeName>
    <alternativeName>
        <fullName>Complex III subunit III</fullName>
    </alternativeName>
    <alternativeName>
        <fullName>Cytochrome b-c1 complex subunit 3</fullName>
    </alternativeName>
    <alternativeName>
        <fullName>Ubiquinol-cytochrome-c reductase complex cytochrome b subunit</fullName>
    </alternativeName>
</protein>
<dbReference type="EMBL" id="AF096626">
    <property type="protein sequence ID" value="AAD27798.1"/>
    <property type="molecule type" value="Genomic_DNA"/>
</dbReference>
<dbReference type="SMR" id="Q9XLE0"/>
<dbReference type="GO" id="GO:0005743">
    <property type="term" value="C:mitochondrial inner membrane"/>
    <property type="evidence" value="ECO:0007669"/>
    <property type="project" value="UniProtKB-SubCell"/>
</dbReference>
<dbReference type="GO" id="GO:0045275">
    <property type="term" value="C:respiratory chain complex III"/>
    <property type="evidence" value="ECO:0007669"/>
    <property type="project" value="InterPro"/>
</dbReference>
<dbReference type="GO" id="GO:0046872">
    <property type="term" value="F:metal ion binding"/>
    <property type="evidence" value="ECO:0007669"/>
    <property type="project" value="UniProtKB-KW"/>
</dbReference>
<dbReference type="GO" id="GO:0008121">
    <property type="term" value="F:ubiquinol-cytochrome-c reductase activity"/>
    <property type="evidence" value="ECO:0007669"/>
    <property type="project" value="InterPro"/>
</dbReference>
<dbReference type="GO" id="GO:0006122">
    <property type="term" value="P:mitochondrial electron transport, ubiquinol to cytochrome c"/>
    <property type="evidence" value="ECO:0007669"/>
    <property type="project" value="TreeGrafter"/>
</dbReference>
<dbReference type="CDD" id="cd00290">
    <property type="entry name" value="cytochrome_b_C"/>
    <property type="match status" value="1"/>
</dbReference>
<dbReference type="CDD" id="cd00284">
    <property type="entry name" value="Cytochrome_b_N"/>
    <property type="match status" value="1"/>
</dbReference>
<dbReference type="FunFam" id="1.20.810.10:FF:000002">
    <property type="entry name" value="Cytochrome b"/>
    <property type="match status" value="1"/>
</dbReference>
<dbReference type="Gene3D" id="1.20.810.10">
    <property type="entry name" value="Cytochrome Bc1 Complex, Chain C"/>
    <property type="match status" value="1"/>
</dbReference>
<dbReference type="InterPro" id="IPR005798">
    <property type="entry name" value="Cyt_b/b6_C"/>
</dbReference>
<dbReference type="InterPro" id="IPR036150">
    <property type="entry name" value="Cyt_b/b6_C_sf"/>
</dbReference>
<dbReference type="InterPro" id="IPR005797">
    <property type="entry name" value="Cyt_b/b6_N"/>
</dbReference>
<dbReference type="InterPro" id="IPR027387">
    <property type="entry name" value="Cytb/b6-like_sf"/>
</dbReference>
<dbReference type="InterPro" id="IPR030689">
    <property type="entry name" value="Cytochrome_b"/>
</dbReference>
<dbReference type="InterPro" id="IPR048260">
    <property type="entry name" value="Cytochrome_b_C_euk/bac"/>
</dbReference>
<dbReference type="InterPro" id="IPR048259">
    <property type="entry name" value="Cytochrome_b_N_euk/bac"/>
</dbReference>
<dbReference type="InterPro" id="IPR016174">
    <property type="entry name" value="Di-haem_cyt_TM"/>
</dbReference>
<dbReference type="PANTHER" id="PTHR19271">
    <property type="entry name" value="CYTOCHROME B"/>
    <property type="match status" value="1"/>
</dbReference>
<dbReference type="PANTHER" id="PTHR19271:SF16">
    <property type="entry name" value="CYTOCHROME B"/>
    <property type="match status" value="1"/>
</dbReference>
<dbReference type="Pfam" id="PF00032">
    <property type="entry name" value="Cytochrom_B_C"/>
    <property type="match status" value="1"/>
</dbReference>
<dbReference type="Pfam" id="PF00033">
    <property type="entry name" value="Cytochrome_B"/>
    <property type="match status" value="1"/>
</dbReference>
<dbReference type="PIRSF" id="PIRSF038885">
    <property type="entry name" value="COB"/>
    <property type="match status" value="1"/>
</dbReference>
<dbReference type="SUPFAM" id="SSF81648">
    <property type="entry name" value="a domain/subunit of cytochrome bc1 complex (Ubiquinol-cytochrome c reductase)"/>
    <property type="match status" value="1"/>
</dbReference>
<dbReference type="SUPFAM" id="SSF81342">
    <property type="entry name" value="Transmembrane di-heme cytochromes"/>
    <property type="match status" value="1"/>
</dbReference>
<dbReference type="PROSITE" id="PS51003">
    <property type="entry name" value="CYTB_CTER"/>
    <property type="match status" value="1"/>
</dbReference>
<dbReference type="PROSITE" id="PS51002">
    <property type="entry name" value="CYTB_NTER"/>
    <property type="match status" value="1"/>
</dbReference>
<geneLocation type="mitochondrion"/>
<proteinExistence type="inferred from homology"/>
<evidence type="ECO:0000250" key="1"/>
<evidence type="ECO:0000250" key="2">
    <source>
        <dbReference type="UniProtKB" id="P00157"/>
    </source>
</evidence>
<evidence type="ECO:0000255" key="3">
    <source>
        <dbReference type="PROSITE-ProRule" id="PRU00967"/>
    </source>
</evidence>
<evidence type="ECO:0000255" key="4">
    <source>
        <dbReference type="PROSITE-ProRule" id="PRU00968"/>
    </source>
</evidence>
<keyword id="KW-0249">Electron transport</keyword>
<keyword id="KW-0349">Heme</keyword>
<keyword id="KW-0408">Iron</keyword>
<keyword id="KW-0472">Membrane</keyword>
<keyword id="KW-0479">Metal-binding</keyword>
<keyword id="KW-0496">Mitochondrion</keyword>
<keyword id="KW-0999">Mitochondrion inner membrane</keyword>
<keyword id="KW-0679">Respiratory chain</keyword>
<keyword id="KW-0812">Transmembrane</keyword>
<keyword id="KW-1133">Transmembrane helix</keyword>
<keyword id="KW-0813">Transport</keyword>
<keyword id="KW-0830">Ubiquinone</keyword>
<feature type="chain" id="PRO_0000061493" description="Cytochrome b">
    <location>
        <begin position="1"/>
        <end position="379"/>
    </location>
</feature>
<feature type="transmembrane region" description="Helical" evidence="2">
    <location>
        <begin position="33"/>
        <end position="53"/>
    </location>
</feature>
<feature type="transmembrane region" description="Helical" evidence="2">
    <location>
        <begin position="77"/>
        <end position="98"/>
    </location>
</feature>
<feature type="transmembrane region" description="Helical" evidence="2">
    <location>
        <begin position="113"/>
        <end position="133"/>
    </location>
</feature>
<feature type="transmembrane region" description="Helical" evidence="2">
    <location>
        <begin position="178"/>
        <end position="198"/>
    </location>
</feature>
<feature type="transmembrane region" description="Helical" evidence="2">
    <location>
        <begin position="226"/>
        <end position="246"/>
    </location>
</feature>
<feature type="transmembrane region" description="Helical" evidence="2">
    <location>
        <begin position="288"/>
        <end position="308"/>
    </location>
</feature>
<feature type="transmembrane region" description="Helical" evidence="2">
    <location>
        <begin position="320"/>
        <end position="340"/>
    </location>
</feature>
<feature type="transmembrane region" description="Helical" evidence="2">
    <location>
        <begin position="347"/>
        <end position="367"/>
    </location>
</feature>
<feature type="binding site" description="axial binding residue" evidence="2">
    <location>
        <position position="83"/>
    </location>
    <ligand>
        <name>heme b</name>
        <dbReference type="ChEBI" id="CHEBI:60344"/>
        <label>b562</label>
    </ligand>
    <ligandPart>
        <name>Fe</name>
        <dbReference type="ChEBI" id="CHEBI:18248"/>
    </ligandPart>
</feature>
<feature type="binding site" description="axial binding residue" evidence="2">
    <location>
        <position position="97"/>
    </location>
    <ligand>
        <name>heme b</name>
        <dbReference type="ChEBI" id="CHEBI:60344"/>
        <label>b566</label>
    </ligand>
    <ligandPart>
        <name>Fe</name>
        <dbReference type="ChEBI" id="CHEBI:18248"/>
    </ligandPart>
</feature>
<feature type="binding site" description="axial binding residue" evidence="2">
    <location>
        <position position="182"/>
    </location>
    <ligand>
        <name>heme b</name>
        <dbReference type="ChEBI" id="CHEBI:60344"/>
        <label>b562</label>
    </ligand>
    <ligandPart>
        <name>Fe</name>
        <dbReference type="ChEBI" id="CHEBI:18248"/>
    </ligandPart>
</feature>
<feature type="binding site" description="axial binding residue" evidence="2">
    <location>
        <position position="196"/>
    </location>
    <ligand>
        <name>heme b</name>
        <dbReference type="ChEBI" id="CHEBI:60344"/>
        <label>b566</label>
    </ligand>
    <ligandPart>
        <name>Fe</name>
        <dbReference type="ChEBI" id="CHEBI:18248"/>
    </ligandPart>
</feature>
<feature type="binding site" evidence="2">
    <location>
        <position position="201"/>
    </location>
    <ligand>
        <name>a ubiquinone</name>
        <dbReference type="ChEBI" id="CHEBI:16389"/>
    </ligand>
</feature>
<name>CYB_REDRE</name>
<accession>Q9XLE0</accession>
<sequence>MTNIRKTHPLMKIVNNAFIDLPAPSNISSWWNFGSLLGICLVLQILTGLFLAMHYTSDTATAFSSVTHICRDVNYGWIIRYMHANGASMFFICLFMHVGRGLYYGSYMFLETWNIGVILLFATMATAFMGYVLPWGQMSFWGATVITNLLSAIPYIGTNLVEWIWGGFSVDKATLTRFFAFHFILPFIIMALAMVHLLFLHETGSNNPTGISSDVDKIPFHPYYTIKDILGALLLILVLMLLVLFTPDLLGDPDNYTPANPLNTPPHIKPEWYFLFAYAILRSIPNKLGGVLALILSILILILMPLLHLSKQRSMMFRPISQCLFWILVADLLTLTWIGGQPVEHPYIIIGQLASIMYFLLILILMPTASTIENNLLKW</sequence>